<comment type="function">
    <text evidence="1">Binds directly to 23S rRNA. The L1 stalk is quite mobile in the ribosome, and is involved in E site tRNA release.</text>
</comment>
<comment type="function">
    <text evidence="1">Protein L1 is also a translational repressor protein, it controls the translation of the L11 operon by binding to its mRNA.</text>
</comment>
<comment type="subunit">
    <text evidence="1">Part of the 50S ribosomal subunit.</text>
</comment>
<comment type="similarity">
    <text evidence="1">Belongs to the universal ribosomal protein uL1 family.</text>
</comment>
<comment type="sequence caution" evidence="2">
    <conflict type="erroneous initiation">
        <sequence resource="EMBL-CDS" id="BAD04342"/>
    </conflict>
</comment>
<reference key="1">
    <citation type="journal article" date="2004" name="Nat. Genet.">
        <title>Reductive evolution suggested from the complete genome sequence of a plant-pathogenic phytoplasma.</title>
        <authorList>
            <person name="Oshima K."/>
            <person name="Kakizawa S."/>
            <person name="Nishigawa H."/>
            <person name="Jung H.-Y."/>
            <person name="Wei W."/>
            <person name="Suzuki S."/>
            <person name="Arashida R."/>
            <person name="Nakata D."/>
            <person name="Miyata S."/>
            <person name="Ugaki M."/>
            <person name="Namba S."/>
        </authorList>
    </citation>
    <scope>NUCLEOTIDE SEQUENCE [LARGE SCALE GENOMIC DNA]</scope>
    <source>
        <strain>OY-M</strain>
    </source>
</reference>
<dbReference type="EMBL" id="AP006628">
    <property type="protein sequence ID" value="BAD04342.1"/>
    <property type="status" value="ALT_INIT"/>
    <property type="molecule type" value="Genomic_DNA"/>
</dbReference>
<dbReference type="SMR" id="Q6YQW6"/>
<dbReference type="STRING" id="262768.PAM_257"/>
<dbReference type="KEGG" id="poy:PAM_257"/>
<dbReference type="eggNOG" id="COG0081">
    <property type="taxonomic scope" value="Bacteria"/>
</dbReference>
<dbReference type="HOGENOM" id="CLU_062853_0_0_14"/>
<dbReference type="BioCyc" id="OYEL262768:G1G26-314-MONOMER"/>
<dbReference type="Proteomes" id="UP000002523">
    <property type="component" value="Chromosome"/>
</dbReference>
<dbReference type="GO" id="GO:0015934">
    <property type="term" value="C:large ribosomal subunit"/>
    <property type="evidence" value="ECO:0007669"/>
    <property type="project" value="InterPro"/>
</dbReference>
<dbReference type="GO" id="GO:0019843">
    <property type="term" value="F:rRNA binding"/>
    <property type="evidence" value="ECO:0007669"/>
    <property type="project" value="UniProtKB-UniRule"/>
</dbReference>
<dbReference type="GO" id="GO:0003735">
    <property type="term" value="F:structural constituent of ribosome"/>
    <property type="evidence" value="ECO:0007669"/>
    <property type="project" value="InterPro"/>
</dbReference>
<dbReference type="GO" id="GO:0000049">
    <property type="term" value="F:tRNA binding"/>
    <property type="evidence" value="ECO:0007669"/>
    <property type="project" value="UniProtKB-KW"/>
</dbReference>
<dbReference type="GO" id="GO:0006417">
    <property type="term" value="P:regulation of translation"/>
    <property type="evidence" value="ECO:0007669"/>
    <property type="project" value="UniProtKB-KW"/>
</dbReference>
<dbReference type="GO" id="GO:0006412">
    <property type="term" value="P:translation"/>
    <property type="evidence" value="ECO:0007669"/>
    <property type="project" value="UniProtKB-UniRule"/>
</dbReference>
<dbReference type="CDD" id="cd00403">
    <property type="entry name" value="Ribosomal_L1"/>
    <property type="match status" value="1"/>
</dbReference>
<dbReference type="FunFam" id="3.40.50.790:FF:000001">
    <property type="entry name" value="50S ribosomal protein L1"/>
    <property type="match status" value="1"/>
</dbReference>
<dbReference type="Gene3D" id="3.30.190.20">
    <property type="match status" value="1"/>
</dbReference>
<dbReference type="Gene3D" id="3.40.50.790">
    <property type="match status" value="1"/>
</dbReference>
<dbReference type="HAMAP" id="MF_01318_B">
    <property type="entry name" value="Ribosomal_uL1_B"/>
    <property type="match status" value="1"/>
</dbReference>
<dbReference type="InterPro" id="IPR005878">
    <property type="entry name" value="Ribosom_uL1_bac-type"/>
</dbReference>
<dbReference type="InterPro" id="IPR002143">
    <property type="entry name" value="Ribosomal_uL1"/>
</dbReference>
<dbReference type="InterPro" id="IPR023674">
    <property type="entry name" value="Ribosomal_uL1-like"/>
</dbReference>
<dbReference type="InterPro" id="IPR028364">
    <property type="entry name" value="Ribosomal_uL1/biogenesis"/>
</dbReference>
<dbReference type="InterPro" id="IPR016095">
    <property type="entry name" value="Ribosomal_uL1_3-a/b-sand"/>
</dbReference>
<dbReference type="InterPro" id="IPR023673">
    <property type="entry name" value="Ribosomal_uL1_CS"/>
</dbReference>
<dbReference type="NCBIfam" id="TIGR01169">
    <property type="entry name" value="rplA_bact"/>
    <property type="match status" value="1"/>
</dbReference>
<dbReference type="PANTHER" id="PTHR36427">
    <property type="entry name" value="54S RIBOSOMAL PROTEIN L1, MITOCHONDRIAL"/>
    <property type="match status" value="1"/>
</dbReference>
<dbReference type="PANTHER" id="PTHR36427:SF3">
    <property type="entry name" value="LARGE RIBOSOMAL SUBUNIT PROTEIN UL1M"/>
    <property type="match status" value="1"/>
</dbReference>
<dbReference type="Pfam" id="PF00687">
    <property type="entry name" value="Ribosomal_L1"/>
    <property type="match status" value="1"/>
</dbReference>
<dbReference type="PIRSF" id="PIRSF002155">
    <property type="entry name" value="Ribosomal_L1"/>
    <property type="match status" value="1"/>
</dbReference>
<dbReference type="SUPFAM" id="SSF56808">
    <property type="entry name" value="Ribosomal protein L1"/>
    <property type="match status" value="1"/>
</dbReference>
<dbReference type="PROSITE" id="PS01199">
    <property type="entry name" value="RIBOSOMAL_L1"/>
    <property type="match status" value="1"/>
</dbReference>
<sequence length="230" mass="25333">MKRGKKYLASLQMFDVKKTYPLQEAISLAKQTQVAKFDAAVECAFHLNLDPKKVDQNLRGALVLPHGTGKVLKVAVLAKGEQAKQAQEAQADYVGDQDLIDKIAKNWFDFDVLVATPEMMPQLSKLGRLLGPKGLMPNPKTGTVTNDVLQAVKEIKNGKIEYRLDKSGNIHAILGKVSFDETKLLENLKTLYLQLMAVKPRTVKGTYIKSVTISTTMAPGIKIDPVTISQ</sequence>
<gene>
    <name evidence="1" type="primary">rplA</name>
    <name type="ordered locus">PAM_257</name>
</gene>
<accession>Q6YQW6</accession>
<proteinExistence type="inferred from homology"/>
<evidence type="ECO:0000255" key="1">
    <source>
        <dbReference type="HAMAP-Rule" id="MF_01318"/>
    </source>
</evidence>
<evidence type="ECO:0000305" key="2"/>
<feature type="chain" id="PRO_0000125703" description="Large ribosomal subunit protein uL1">
    <location>
        <begin position="1"/>
        <end position="230"/>
    </location>
</feature>
<name>RL1_ONYPE</name>
<organism>
    <name type="scientific">Onion yellows phytoplasma (strain OY-M)</name>
    <dbReference type="NCBI Taxonomy" id="262768"/>
    <lineage>
        <taxon>Bacteria</taxon>
        <taxon>Bacillati</taxon>
        <taxon>Mycoplasmatota</taxon>
        <taxon>Mollicutes</taxon>
        <taxon>Acholeplasmatales</taxon>
        <taxon>Acholeplasmataceae</taxon>
        <taxon>Candidatus Phytoplasma</taxon>
        <taxon>16SrI (Aster yellows group)</taxon>
    </lineage>
</organism>
<keyword id="KW-0678">Repressor</keyword>
<keyword id="KW-0687">Ribonucleoprotein</keyword>
<keyword id="KW-0689">Ribosomal protein</keyword>
<keyword id="KW-0694">RNA-binding</keyword>
<keyword id="KW-0699">rRNA-binding</keyword>
<keyword id="KW-0810">Translation regulation</keyword>
<keyword id="KW-0820">tRNA-binding</keyword>
<protein>
    <recommendedName>
        <fullName evidence="1">Large ribosomal subunit protein uL1</fullName>
    </recommendedName>
    <alternativeName>
        <fullName evidence="2">50S ribosomal protein L1</fullName>
    </alternativeName>
</protein>